<protein>
    <recommendedName>
        <fullName evidence="1">Phosphate acyltransferase</fullName>
        <ecNumber evidence="1">2.3.1.274</ecNumber>
    </recommendedName>
    <alternativeName>
        <fullName evidence="1">Acyl-ACP phosphotransacylase</fullName>
    </alternativeName>
    <alternativeName>
        <fullName evidence="1">Acyl-[acyl-carrier-protein]--phosphate acyltransferase</fullName>
    </alternativeName>
    <alternativeName>
        <fullName evidence="1">Phosphate-acyl-ACP acyltransferase</fullName>
    </alternativeName>
</protein>
<feature type="chain" id="PRO_0000189937" description="Phosphate acyltransferase">
    <location>
        <begin position="1"/>
        <end position="328"/>
    </location>
</feature>
<gene>
    <name evidence="1" type="primary">plsX</name>
    <name type="ordered locus">SA1072</name>
</gene>
<comment type="function">
    <text evidence="1">Catalyzes the reversible formation of acyl-phosphate (acyl-PO(4)) from acyl-[acyl-carrier-protein] (acyl-ACP). This enzyme utilizes acyl-ACP as fatty acyl donor, but not acyl-CoA.</text>
</comment>
<comment type="catalytic activity">
    <reaction evidence="1">
        <text>a fatty acyl-[ACP] + phosphate = an acyl phosphate + holo-[ACP]</text>
        <dbReference type="Rhea" id="RHEA:42292"/>
        <dbReference type="Rhea" id="RHEA-COMP:9685"/>
        <dbReference type="Rhea" id="RHEA-COMP:14125"/>
        <dbReference type="ChEBI" id="CHEBI:43474"/>
        <dbReference type="ChEBI" id="CHEBI:59918"/>
        <dbReference type="ChEBI" id="CHEBI:64479"/>
        <dbReference type="ChEBI" id="CHEBI:138651"/>
        <dbReference type="EC" id="2.3.1.274"/>
    </reaction>
</comment>
<comment type="pathway">
    <text evidence="1">Lipid metabolism; phospholipid metabolism.</text>
</comment>
<comment type="subunit">
    <text evidence="1">Homodimer. Probably interacts with PlsY.</text>
</comment>
<comment type="subcellular location">
    <subcellularLocation>
        <location evidence="1">Cytoplasm</location>
    </subcellularLocation>
    <text evidence="1">Associated with the membrane possibly through PlsY.</text>
</comment>
<comment type="similarity">
    <text evidence="1">Belongs to the PlsX family.</text>
</comment>
<proteinExistence type="evidence at protein level"/>
<organism>
    <name type="scientific">Staphylococcus aureus (strain N315)</name>
    <dbReference type="NCBI Taxonomy" id="158879"/>
    <lineage>
        <taxon>Bacteria</taxon>
        <taxon>Bacillati</taxon>
        <taxon>Bacillota</taxon>
        <taxon>Bacilli</taxon>
        <taxon>Bacillales</taxon>
        <taxon>Staphylococcaceae</taxon>
        <taxon>Staphylococcus</taxon>
    </lineage>
</organism>
<accession>P65739</accession>
<accession>Q99UN9</accession>
<dbReference type="EC" id="2.3.1.274" evidence="1"/>
<dbReference type="EMBL" id="BA000018">
    <property type="protein sequence ID" value="BAB42324.1"/>
    <property type="molecule type" value="Genomic_DNA"/>
</dbReference>
<dbReference type="PIR" id="H89895">
    <property type="entry name" value="H89895"/>
</dbReference>
<dbReference type="RefSeq" id="WP_000239753.1">
    <property type="nucleotide sequence ID" value="NC_002745.2"/>
</dbReference>
<dbReference type="SMR" id="P65739"/>
<dbReference type="EnsemblBacteria" id="BAB42324">
    <property type="protein sequence ID" value="BAB42324"/>
    <property type="gene ID" value="BAB42324"/>
</dbReference>
<dbReference type="KEGG" id="sau:SA1072"/>
<dbReference type="HOGENOM" id="CLU_039379_1_1_9"/>
<dbReference type="UniPathway" id="UPA00085"/>
<dbReference type="GO" id="GO:0005737">
    <property type="term" value="C:cytoplasm"/>
    <property type="evidence" value="ECO:0007669"/>
    <property type="project" value="UniProtKB-SubCell"/>
</dbReference>
<dbReference type="GO" id="GO:0043811">
    <property type="term" value="F:phosphate:acyl-[acyl carrier protein] acyltransferase activity"/>
    <property type="evidence" value="ECO:0007669"/>
    <property type="project" value="UniProtKB-UniRule"/>
</dbReference>
<dbReference type="GO" id="GO:0006633">
    <property type="term" value="P:fatty acid biosynthetic process"/>
    <property type="evidence" value="ECO:0007669"/>
    <property type="project" value="UniProtKB-UniRule"/>
</dbReference>
<dbReference type="GO" id="GO:0008654">
    <property type="term" value="P:phospholipid biosynthetic process"/>
    <property type="evidence" value="ECO:0007669"/>
    <property type="project" value="UniProtKB-KW"/>
</dbReference>
<dbReference type="Gene3D" id="3.40.718.10">
    <property type="entry name" value="Isopropylmalate Dehydrogenase"/>
    <property type="match status" value="1"/>
</dbReference>
<dbReference type="HAMAP" id="MF_00019">
    <property type="entry name" value="PlsX"/>
    <property type="match status" value="1"/>
</dbReference>
<dbReference type="InterPro" id="IPR003664">
    <property type="entry name" value="FA_synthesis"/>
</dbReference>
<dbReference type="InterPro" id="IPR012281">
    <property type="entry name" value="Phospholipid_synth_PlsX-like"/>
</dbReference>
<dbReference type="NCBIfam" id="TIGR00182">
    <property type="entry name" value="plsX"/>
    <property type="match status" value="1"/>
</dbReference>
<dbReference type="PANTHER" id="PTHR30100">
    <property type="entry name" value="FATTY ACID/PHOSPHOLIPID SYNTHESIS PROTEIN PLSX"/>
    <property type="match status" value="1"/>
</dbReference>
<dbReference type="PANTHER" id="PTHR30100:SF1">
    <property type="entry name" value="PHOSPHATE ACYLTRANSFERASE"/>
    <property type="match status" value="1"/>
</dbReference>
<dbReference type="Pfam" id="PF02504">
    <property type="entry name" value="FA_synthesis"/>
    <property type="match status" value="1"/>
</dbReference>
<dbReference type="PIRSF" id="PIRSF002465">
    <property type="entry name" value="Phsphlp_syn_PlsX"/>
    <property type="match status" value="1"/>
</dbReference>
<dbReference type="SUPFAM" id="SSF53659">
    <property type="entry name" value="Isocitrate/Isopropylmalate dehydrogenase-like"/>
    <property type="match status" value="1"/>
</dbReference>
<evidence type="ECO:0000255" key="1">
    <source>
        <dbReference type="HAMAP-Rule" id="MF_00019"/>
    </source>
</evidence>
<name>PLSX_STAAN</name>
<keyword id="KW-0963">Cytoplasm</keyword>
<keyword id="KW-0444">Lipid biosynthesis</keyword>
<keyword id="KW-0443">Lipid metabolism</keyword>
<keyword id="KW-0594">Phospholipid biosynthesis</keyword>
<keyword id="KW-1208">Phospholipid metabolism</keyword>
<keyword id="KW-0808">Transferase</keyword>
<sequence>MVKLAIDMMGGDNAPDIVLEAVQKAVEDFKNLEIMLFGDEKKYNLNHERIEFRHCSEKIEMEDEPVRAIKRKKDSSMVKMAEAVKSGEADGCVSAGNTGALMSVGLFIVGRIKGVARPALVVTLPTIDGKGFVFLDVGANADAKPEHLLQYAQLGDIYAQKIRGIDNPKISLLNIGTEPAKGNSLTKKSFELLNQDHSLNFVGNIEAKTLMDGDTDVVVTDGYTGNMVLKNLEGTAKSIGKMLKDTIMSSTKNKLAGAILKKDLAEFAKKMDYSEYGGSVLLGLEGTVVKAHGSSNAKAFYSAIRQAKIAGEQNIVQTMKETVGESNE</sequence>
<reference key="1">
    <citation type="journal article" date="2001" name="Lancet">
        <title>Whole genome sequencing of meticillin-resistant Staphylococcus aureus.</title>
        <authorList>
            <person name="Kuroda M."/>
            <person name="Ohta T."/>
            <person name="Uchiyama I."/>
            <person name="Baba T."/>
            <person name="Yuzawa H."/>
            <person name="Kobayashi I."/>
            <person name="Cui L."/>
            <person name="Oguchi A."/>
            <person name="Aoki K."/>
            <person name="Nagai Y."/>
            <person name="Lian J.-Q."/>
            <person name="Ito T."/>
            <person name="Kanamori M."/>
            <person name="Matsumaru H."/>
            <person name="Maruyama A."/>
            <person name="Murakami H."/>
            <person name="Hosoyama A."/>
            <person name="Mizutani-Ui Y."/>
            <person name="Takahashi N.K."/>
            <person name="Sawano T."/>
            <person name="Inoue R."/>
            <person name="Kaito C."/>
            <person name="Sekimizu K."/>
            <person name="Hirakawa H."/>
            <person name="Kuhara S."/>
            <person name="Goto S."/>
            <person name="Yabuzaki J."/>
            <person name="Kanehisa M."/>
            <person name="Yamashita A."/>
            <person name="Oshima K."/>
            <person name="Furuya K."/>
            <person name="Yoshino C."/>
            <person name="Shiba T."/>
            <person name="Hattori M."/>
            <person name="Ogasawara N."/>
            <person name="Hayashi H."/>
            <person name="Hiramatsu K."/>
        </authorList>
    </citation>
    <scope>NUCLEOTIDE SEQUENCE [LARGE SCALE GENOMIC DNA]</scope>
    <source>
        <strain>N315</strain>
    </source>
</reference>
<reference key="2">
    <citation type="submission" date="2007-10" db="UniProtKB">
        <title>Shotgun proteomic analysis of total and membrane protein extracts of S. aureus strain N315.</title>
        <authorList>
            <person name="Vaezzadeh A.R."/>
            <person name="Deshusses J."/>
            <person name="Lescuyer P."/>
            <person name="Hochstrasser D.F."/>
        </authorList>
    </citation>
    <scope>IDENTIFICATION BY MASS SPECTROMETRY [LARGE SCALE ANALYSIS]</scope>
    <source>
        <strain>N315</strain>
    </source>
</reference>